<feature type="signal peptide" evidence="2">
    <location>
        <begin position="1"/>
        <end position="22"/>
    </location>
</feature>
<feature type="chain" id="PRO_5000221332" description="Probable glucan 1,3-beta-glucosidase A">
    <location>
        <begin position="23"/>
        <end position="416"/>
    </location>
</feature>
<feature type="active site" description="Proton donor" evidence="1">
    <location>
        <position position="210"/>
    </location>
</feature>
<feature type="active site" description="Nucleophile" evidence="1">
    <location>
        <position position="308"/>
    </location>
</feature>
<feature type="glycosylation site" description="N-linked (GlcNAc...) asparagine" evidence="2">
    <location>
        <position position="183"/>
    </location>
</feature>
<feature type="disulfide bond" evidence="1">
    <location>
        <begin position="290"/>
        <end position="415"/>
    </location>
</feature>
<feature type="disulfide bond" evidence="1">
    <location>
        <begin position="316"/>
        <end position="342"/>
    </location>
</feature>
<organism>
    <name type="scientific">Aspergillus niger (strain ATCC MYA-4892 / CBS 513.88 / FGSC A1513)</name>
    <dbReference type="NCBI Taxonomy" id="425011"/>
    <lineage>
        <taxon>Eukaryota</taxon>
        <taxon>Fungi</taxon>
        <taxon>Dikarya</taxon>
        <taxon>Ascomycota</taxon>
        <taxon>Pezizomycotina</taxon>
        <taxon>Eurotiomycetes</taxon>
        <taxon>Eurotiomycetidae</taxon>
        <taxon>Eurotiales</taxon>
        <taxon>Aspergillaceae</taxon>
        <taxon>Aspergillus</taxon>
        <taxon>Aspergillus subgen. Circumdati</taxon>
    </lineage>
</organism>
<sequence>MFVESAKKALLALSLLAASAQAVPRVRRQGASSSFDYKSQIVRGVNLGGWLVTEPWITPSLYDSTGGGAVDEWTLCQILGKDEAQAKLSSHWSSFITQSDFDRMAQAGLNHVRIPIGYWAVAPIDGEPYVSGQIDYLDQAVTWARAAGLKVLVDLHGAPGSQNGFDNSGHRGPIQWQQGDTVNQTMTAFDALARRYAQSDTVTAIEAVNEPNIPGGVNEDGLKNYYYGALADVQRLNPSTTLFMSDGFQPVESWNGFMQGSNVVMDTHHYQVFDTGLLSMSIDDHVKTACSLATQHTMQSDKPVVVGEWTGALTDCAKYLNGVGNAARYDGTYMSTTKYGDCTGKSTGSVADFSADEKANTRRYIEAQLEAYEMKSGWLFWTWKTEGAPGWDMQDLLANQLFPTSPTDRQYPHQCS</sequence>
<accession>A2RAR6</accession>
<comment type="function">
    <text evidence="1">Beta-glucanases participate in the metabolism of beta-glucan, the main structural component of the cell wall. It could also function biosynthetically as a transglycosylase (By similarity).</text>
</comment>
<comment type="catalytic activity">
    <reaction>
        <text>Successive hydrolysis of beta-D-glucose units from the non-reducing ends of (1-&gt;3)-beta-D-glucans, releasing alpha-glucose.</text>
        <dbReference type="EC" id="3.2.1.58"/>
    </reaction>
</comment>
<comment type="cofactor">
    <cofactor evidence="1">
        <name>Mn(2+)</name>
        <dbReference type="ChEBI" id="CHEBI:29035"/>
    </cofactor>
</comment>
<comment type="subunit">
    <text evidence="1">Monomer.</text>
</comment>
<comment type="subcellular location">
    <subcellularLocation>
        <location evidence="1">Secreted</location>
    </subcellularLocation>
</comment>
<comment type="similarity">
    <text evidence="3">Belongs to the glycosyl hydrolase 5 (cellulase A) family.</text>
</comment>
<proteinExistence type="inferred from homology"/>
<gene>
    <name type="primary">exgA</name>
    <name type="synonym">exg1</name>
    <name type="ORF">An18g04100</name>
</gene>
<name>EXGA_ASPNC</name>
<evidence type="ECO:0000250" key="1"/>
<evidence type="ECO:0000255" key="2"/>
<evidence type="ECO:0000305" key="3"/>
<dbReference type="EC" id="3.2.1.58"/>
<dbReference type="EMBL" id="AM270406">
    <property type="protein sequence ID" value="CAK43212.1"/>
    <property type="molecule type" value="Genomic_DNA"/>
</dbReference>
<dbReference type="RefSeq" id="XP_001398868.1">
    <property type="nucleotide sequence ID" value="XM_001398831.2"/>
</dbReference>
<dbReference type="SMR" id="A2RAR6"/>
<dbReference type="CAZy" id="GH5">
    <property type="family name" value="Glycoside Hydrolase Family 5"/>
</dbReference>
<dbReference type="GlyCosmos" id="A2RAR6">
    <property type="glycosylation" value="1 site, No reported glycans"/>
</dbReference>
<dbReference type="EnsemblFungi" id="CAK43212">
    <property type="protein sequence ID" value="CAK43212"/>
    <property type="gene ID" value="An18g04100"/>
</dbReference>
<dbReference type="GeneID" id="4989974"/>
<dbReference type="KEGG" id="ang:An18g04100"/>
<dbReference type="VEuPathDB" id="FungiDB:An18g04100"/>
<dbReference type="HOGENOM" id="CLU_004624_0_1_1"/>
<dbReference type="Proteomes" id="UP000006706">
    <property type="component" value="Chromosome 8L"/>
</dbReference>
<dbReference type="GO" id="GO:0009986">
    <property type="term" value="C:cell surface"/>
    <property type="evidence" value="ECO:0007669"/>
    <property type="project" value="TreeGrafter"/>
</dbReference>
<dbReference type="GO" id="GO:0005576">
    <property type="term" value="C:extracellular region"/>
    <property type="evidence" value="ECO:0007669"/>
    <property type="project" value="UniProtKB-SubCell"/>
</dbReference>
<dbReference type="GO" id="GO:0004338">
    <property type="term" value="F:glucan exo-1,3-beta-glucosidase activity"/>
    <property type="evidence" value="ECO:0007669"/>
    <property type="project" value="UniProtKB-EC"/>
</dbReference>
<dbReference type="GO" id="GO:0046872">
    <property type="term" value="F:metal ion binding"/>
    <property type="evidence" value="ECO:0007669"/>
    <property type="project" value="UniProtKB-KW"/>
</dbReference>
<dbReference type="GO" id="GO:0071555">
    <property type="term" value="P:cell wall organization"/>
    <property type="evidence" value="ECO:0007669"/>
    <property type="project" value="UniProtKB-KW"/>
</dbReference>
<dbReference type="GO" id="GO:0009251">
    <property type="term" value="P:glucan catabolic process"/>
    <property type="evidence" value="ECO:0007669"/>
    <property type="project" value="TreeGrafter"/>
</dbReference>
<dbReference type="FunFam" id="3.20.20.80:FF:000033">
    <property type="entry name" value="Glucan 1,3-beta-glucosidase A"/>
    <property type="match status" value="1"/>
</dbReference>
<dbReference type="Gene3D" id="3.20.20.80">
    <property type="entry name" value="Glycosidases"/>
    <property type="match status" value="1"/>
</dbReference>
<dbReference type="InterPro" id="IPR001547">
    <property type="entry name" value="Glyco_hydro_5"/>
</dbReference>
<dbReference type="InterPro" id="IPR017853">
    <property type="entry name" value="Glycoside_hydrolase_SF"/>
</dbReference>
<dbReference type="InterPro" id="IPR050386">
    <property type="entry name" value="Glycosyl_hydrolase_5"/>
</dbReference>
<dbReference type="PANTHER" id="PTHR31297:SF1">
    <property type="entry name" value="GLUCAN 1,3-BETA-GLUCOSIDASE I_II-RELATED"/>
    <property type="match status" value="1"/>
</dbReference>
<dbReference type="PANTHER" id="PTHR31297">
    <property type="entry name" value="GLUCAN ENDO-1,6-BETA-GLUCOSIDASE B"/>
    <property type="match status" value="1"/>
</dbReference>
<dbReference type="Pfam" id="PF00150">
    <property type="entry name" value="Cellulase"/>
    <property type="match status" value="1"/>
</dbReference>
<dbReference type="SUPFAM" id="SSF51445">
    <property type="entry name" value="(Trans)glycosidases"/>
    <property type="match status" value="1"/>
</dbReference>
<reference key="1">
    <citation type="journal article" date="2007" name="Nat. Biotechnol.">
        <title>Genome sequencing and analysis of the versatile cell factory Aspergillus niger CBS 513.88.</title>
        <authorList>
            <person name="Pel H.J."/>
            <person name="de Winde J.H."/>
            <person name="Archer D.B."/>
            <person name="Dyer P.S."/>
            <person name="Hofmann G."/>
            <person name="Schaap P.J."/>
            <person name="Turner G."/>
            <person name="de Vries R.P."/>
            <person name="Albang R."/>
            <person name="Albermann K."/>
            <person name="Andersen M.R."/>
            <person name="Bendtsen J.D."/>
            <person name="Benen J.A.E."/>
            <person name="van den Berg M."/>
            <person name="Breestraat S."/>
            <person name="Caddick M.X."/>
            <person name="Contreras R."/>
            <person name="Cornell M."/>
            <person name="Coutinho P.M."/>
            <person name="Danchin E.G.J."/>
            <person name="Debets A.J.M."/>
            <person name="Dekker P."/>
            <person name="van Dijck P.W.M."/>
            <person name="van Dijk A."/>
            <person name="Dijkhuizen L."/>
            <person name="Driessen A.J.M."/>
            <person name="d'Enfert C."/>
            <person name="Geysens S."/>
            <person name="Goosen C."/>
            <person name="Groot G.S.P."/>
            <person name="de Groot P.W.J."/>
            <person name="Guillemette T."/>
            <person name="Henrissat B."/>
            <person name="Herweijer M."/>
            <person name="van den Hombergh J.P.T.W."/>
            <person name="van den Hondel C.A.M.J.J."/>
            <person name="van der Heijden R.T.J.M."/>
            <person name="van der Kaaij R.M."/>
            <person name="Klis F.M."/>
            <person name="Kools H.J."/>
            <person name="Kubicek C.P."/>
            <person name="van Kuyk P.A."/>
            <person name="Lauber J."/>
            <person name="Lu X."/>
            <person name="van der Maarel M.J.E.C."/>
            <person name="Meulenberg R."/>
            <person name="Menke H."/>
            <person name="Mortimer M.A."/>
            <person name="Nielsen J."/>
            <person name="Oliver S.G."/>
            <person name="Olsthoorn M."/>
            <person name="Pal K."/>
            <person name="van Peij N.N.M.E."/>
            <person name="Ram A.F.J."/>
            <person name="Rinas U."/>
            <person name="Roubos J.A."/>
            <person name="Sagt C.M.J."/>
            <person name="Schmoll M."/>
            <person name="Sun J."/>
            <person name="Ussery D."/>
            <person name="Varga J."/>
            <person name="Vervecken W."/>
            <person name="van de Vondervoort P.J.J."/>
            <person name="Wedler H."/>
            <person name="Woesten H.A.B."/>
            <person name="Zeng A.-P."/>
            <person name="van Ooyen A.J.J."/>
            <person name="Visser J."/>
            <person name="Stam H."/>
        </authorList>
    </citation>
    <scope>NUCLEOTIDE SEQUENCE [LARGE SCALE GENOMIC DNA]</scope>
    <source>
        <strain>ATCC MYA-4892 / CBS 513.88 / FGSC A1513</strain>
    </source>
</reference>
<protein>
    <recommendedName>
        <fullName>Probable glucan 1,3-beta-glucosidase A</fullName>
        <ecNumber>3.2.1.58</ecNumber>
    </recommendedName>
    <alternativeName>
        <fullName>Exo-1,3-beta-glucanase 1</fullName>
    </alternativeName>
    <alternativeName>
        <fullName>Exo-1,3-beta-glucanase A</fullName>
    </alternativeName>
</protein>
<keyword id="KW-0119">Carbohydrate metabolism</keyword>
<keyword id="KW-0961">Cell wall biogenesis/degradation</keyword>
<keyword id="KW-1015">Disulfide bond</keyword>
<keyword id="KW-0325">Glycoprotein</keyword>
<keyword id="KW-0326">Glycosidase</keyword>
<keyword id="KW-0378">Hydrolase</keyword>
<keyword id="KW-0464">Manganese</keyword>
<keyword id="KW-0479">Metal-binding</keyword>
<keyword id="KW-0624">Polysaccharide degradation</keyword>
<keyword id="KW-1185">Reference proteome</keyword>
<keyword id="KW-0964">Secreted</keyword>
<keyword id="KW-0732">Signal</keyword>